<sequence>MNNKPIVVALDFDDKNAALQLIDRLDPQMCRLKVGKEMFTLFGPELVKDIHSRDFDLFLDLKFHDIPNTVAKAVTAAAELGVWMTNIHATGGLAMMEAAKKALVPYGKDAPLLIAVTVLTSMSDEDLKLIGIDVPAFEHVQRLARLTQQAGLDGVVCSAHEAQLLKSSLGESFKLVTPGIRPAGADKGDQHRVMTPPQAIEAGSDYLVIGRPITKAADPLAALTAIHQSLSIPG</sequence>
<proteinExistence type="inferred from homology"/>
<keyword id="KW-0210">Decarboxylase</keyword>
<keyword id="KW-0456">Lyase</keyword>
<keyword id="KW-0665">Pyrimidine biosynthesis</keyword>
<keyword id="KW-1185">Reference proteome</keyword>
<dbReference type="EC" id="4.1.1.23" evidence="1"/>
<dbReference type="EMBL" id="CP000821">
    <property type="protein sequence ID" value="ABV36903.1"/>
    <property type="molecule type" value="Genomic_DNA"/>
</dbReference>
<dbReference type="RefSeq" id="WP_012142638.1">
    <property type="nucleotide sequence ID" value="NC_009831.1"/>
</dbReference>
<dbReference type="SMR" id="A8FVN0"/>
<dbReference type="STRING" id="425104.Ssed_2294"/>
<dbReference type="KEGG" id="sse:Ssed_2294"/>
<dbReference type="eggNOG" id="COG0284">
    <property type="taxonomic scope" value="Bacteria"/>
</dbReference>
<dbReference type="HOGENOM" id="CLU_067069_0_0_6"/>
<dbReference type="OrthoDB" id="9806203at2"/>
<dbReference type="UniPathway" id="UPA00070">
    <property type="reaction ID" value="UER00120"/>
</dbReference>
<dbReference type="Proteomes" id="UP000002015">
    <property type="component" value="Chromosome"/>
</dbReference>
<dbReference type="GO" id="GO:0005829">
    <property type="term" value="C:cytosol"/>
    <property type="evidence" value="ECO:0007669"/>
    <property type="project" value="TreeGrafter"/>
</dbReference>
<dbReference type="GO" id="GO:0004590">
    <property type="term" value="F:orotidine-5'-phosphate decarboxylase activity"/>
    <property type="evidence" value="ECO:0007669"/>
    <property type="project" value="UniProtKB-UniRule"/>
</dbReference>
<dbReference type="GO" id="GO:0006207">
    <property type="term" value="P:'de novo' pyrimidine nucleobase biosynthetic process"/>
    <property type="evidence" value="ECO:0007669"/>
    <property type="project" value="InterPro"/>
</dbReference>
<dbReference type="GO" id="GO:0044205">
    <property type="term" value="P:'de novo' UMP biosynthetic process"/>
    <property type="evidence" value="ECO:0007669"/>
    <property type="project" value="UniProtKB-UniRule"/>
</dbReference>
<dbReference type="CDD" id="cd04725">
    <property type="entry name" value="OMP_decarboxylase_like"/>
    <property type="match status" value="1"/>
</dbReference>
<dbReference type="FunFam" id="3.20.20.70:FF:000015">
    <property type="entry name" value="Orotidine 5'-phosphate decarboxylase"/>
    <property type="match status" value="1"/>
</dbReference>
<dbReference type="Gene3D" id="3.20.20.70">
    <property type="entry name" value="Aldolase class I"/>
    <property type="match status" value="1"/>
</dbReference>
<dbReference type="HAMAP" id="MF_01200_B">
    <property type="entry name" value="OMPdecase_type1_B"/>
    <property type="match status" value="1"/>
</dbReference>
<dbReference type="InterPro" id="IPR013785">
    <property type="entry name" value="Aldolase_TIM"/>
</dbReference>
<dbReference type="InterPro" id="IPR014732">
    <property type="entry name" value="OMPdecase"/>
</dbReference>
<dbReference type="InterPro" id="IPR018089">
    <property type="entry name" value="OMPdecase_AS"/>
</dbReference>
<dbReference type="InterPro" id="IPR047596">
    <property type="entry name" value="OMPdecase_bac"/>
</dbReference>
<dbReference type="InterPro" id="IPR001754">
    <property type="entry name" value="OMPdeCOase_dom"/>
</dbReference>
<dbReference type="InterPro" id="IPR011060">
    <property type="entry name" value="RibuloseP-bd_barrel"/>
</dbReference>
<dbReference type="NCBIfam" id="NF001273">
    <property type="entry name" value="PRK00230.1"/>
    <property type="match status" value="1"/>
</dbReference>
<dbReference type="NCBIfam" id="TIGR01740">
    <property type="entry name" value="pyrF"/>
    <property type="match status" value="1"/>
</dbReference>
<dbReference type="PANTHER" id="PTHR32119">
    <property type="entry name" value="OROTIDINE 5'-PHOSPHATE DECARBOXYLASE"/>
    <property type="match status" value="1"/>
</dbReference>
<dbReference type="PANTHER" id="PTHR32119:SF2">
    <property type="entry name" value="OROTIDINE 5'-PHOSPHATE DECARBOXYLASE"/>
    <property type="match status" value="1"/>
</dbReference>
<dbReference type="Pfam" id="PF00215">
    <property type="entry name" value="OMPdecase"/>
    <property type="match status" value="1"/>
</dbReference>
<dbReference type="SMART" id="SM00934">
    <property type="entry name" value="OMPdecase"/>
    <property type="match status" value="1"/>
</dbReference>
<dbReference type="SUPFAM" id="SSF51366">
    <property type="entry name" value="Ribulose-phoshate binding barrel"/>
    <property type="match status" value="1"/>
</dbReference>
<dbReference type="PROSITE" id="PS00156">
    <property type="entry name" value="OMPDECASE"/>
    <property type="match status" value="1"/>
</dbReference>
<evidence type="ECO:0000255" key="1">
    <source>
        <dbReference type="HAMAP-Rule" id="MF_01200"/>
    </source>
</evidence>
<reference key="1">
    <citation type="submission" date="2007-08" db="EMBL/GenBank/DDBJ databases">
        <title>Complete sequence of Shewanella sediminis HAW-EB3.</title>
        <authorList>
            <consortium name="US DOE Joint Genome Institute"/>
            <person name="Copeland A."/>
            <person name="Lucas S."/>
            <person name="Lapidus A."/>
            <person name="Barry K."/>
            <person name="Glavina del Rio T."/>
            <person name="Dalin E."/>
            <person name="Tice H."/>
            <person name="Pitluck S."/>
            <person name="Chertkov O."/>
            <person name="Brettin T."/>
            <person name="Bruce D."/>
            <person name="Detter J.C."/>
            <person name="Han C."/>
            <person name="Schmutz J."/>
            <person name="Larimer F."/>
            <person name="Land M."/>
            <person name="Hauser L."/>
            <person name="Kyrpides N."/>
            <person name="Kim E."/>
            <person name="Zhao J.-S."/>
            <person name="Richardson P."/>
        </authorList>
    </citation>
    <scope>NUCLEOTIDE SEQUENCE [LARGE SCALE GENOMIC DNA]</scope>
    <source>
        <strain>HAW-EB3</strain>
    </source>
</reference>
<gene>
    <name evidence="1" type="primary">pyrF</name>
    <name type="ordered locus">Ssed_2294</name>
</gene>
<comment type="function">
    <text evidence="1">Catalyzes the decarboxylation of orotidine 5'-monophosphate (OMP) to uridine 5'-monophosphate (UMP).</text>
</comment>
<comment type="catalytic activity">
    <reaction evidence="1">
        <text>orotidine 5'-phosphate + H(+) = UMP + CO2</text>
        <dbReference type="Rhea" id="RHEA:11596"/>
        <dbReference type="ChEBI" id="CHEBI:15378"/>
        <dbReference type="ChEBI" id="CHEBI:16526"/>
        <dbReference type="ChEBI" id="CHEBI:57538"/>
        <dbReference type="ChEBI" id="CHEBI:57865"/>
        <dbReference type="EC" id="4.1.1.23"/>
    </reaction>
</comment>
<comment type="pathway">
    <text evidence="1">Pyrimidine metabolism; UMP biosynthesis via de novo pathway; UMP from orotate: step 2/2.</text>
</comment>
<comment type="subunit">
    <text evidence="1">Homodimer.</text>
</comment>
<comment type="similarity">
    <text evidence="1">Belongs to the OMP decarboxylase family. Type 1 subfamily.</text>
</comment>
<accession>A8FVN0</accession>
<feature type="chain" id="PRO_1000085495" description="Orotidine 5'-phosphate decarboxylase">
    <location>
        <begin position="1"/>
        <end position="234"/>
    </location>
</feature>
<feature type="active site" description="Proton donor" evidence="1">
    <location>
        <position position="62"/>
    </location>
</feature>
<feature type="binding site" evidence="1">
    <location>
        <position position="11"/>
    </location>
    <ligand>
        <name>substrate</name>
    </ligand>
</feature>
<feature type="binding site" evidence="1">
    <location>
        <position position="33"/>
    </location>
    <ligand>
        <name>substrate</name>
    </ligand>
</feature>
<feature type="binding site" evidence="1">
    <location>
        <begin position="60"/>
        <end position="69"/>
    </location>
    <ligand>
        <name>substrate</name>
    </ligand>
</feature>
<feature type="binding site" evidence="1">
    <location>
        <position position="120"/>
    </location>
    <ligand>
        <name>substrate</name>
    </ligand>
</feature>
<feature type="binding site" evidence="1">
    <location>
        <position position="181"/>
    </location>
    <ligand>
        <name>substrate</name>
    </ligand>
</feature>
<feature type="binding site" evidence="1">
    <location>
        <position position="190"/>
    </location>
    <ligand>
        <name>substrate</name>
    </ligand>
</feature>
<feature type="binding site" evidence="1">
    <location>
        <position position="210"/>
    </location>
    <ligand>
        <name>substrate</name>
    </ligand>
</feature>
<feature type="binding site" evidence="1">
    <location>
        <position position="211"/>
    </location>
    <ligand>
        <name>substrate</name>
    </ligand>
</feature>
<protein>
    <recommendedName>
        <fullName evidence="1">Orotidine 5'-phosphate decarboxylase</fullName>
        <ecNumber evidence="1">4.1.1.23</ecNumber>
    </recommendedName>
    <alternativeName>
        <fullName evidence="1">OMP decarboxylase</fullName>
        <shortName evidence="1">OMPDCase</shortName>
        <shortName evidence="1">OMPdecase</shortName>
    </alternativeName>
</protein>
<organism>
    <name type="scientific">Shewanella sediminis (strain HAW-EB3)</name>
    <dbReference type="NCBI Taxonomy" id="425104"/>
    <lineage>
        <taxon>Bacteria</taxon>
        <taxon>Pseudomonadati</taxon>
        <taxon>Pseudomonadota</taxon>
        <taxon>Gammaproteobacteria</taxon>
        <taxon>Alteromonadales</taxon>
        <taxon>Shewanellaceae</taxon>
        <taxon>Shewanella</taxon>
    </lineage>
</organism>
<name>PYRF_SHESH</name>